<dbReference type="EC" id="6.2.1.26"/>
<dbReference type="EMBL" id="AL123456">
    <property type="protein sequence ID" value="CCP43280.1"/>
    <property type="status" value="ALT_INIT"/>
    <property type="molecule type" value="Genomic_DNA"/>
</dbReference>
<dbReference type="PIR" id="A70547">
    <property type="entry name" value="A70547"/>
</dbReference>
<dbReference type="RefSeq" id="NP_215056.1">
    <property type="nucleotide sequence ID" value="NC_000962.3"/>
</dbReference>
<dbReference type="SMR" id="P9WQ39"/>
<dbReference type="FunCoup" id="P9WQ39">
    <property type="interactions" value="133"/>
</dbReference>
<dbReference type="STRING" id="83332.Rv0542c"/>
<dbReference type="PaxDb" id="83332-Rv0542c"/>
<dbReference type="DNASU" id="887507"/>
<dbReference type="GeneID" id="887507"/>
<dbReference type="KEGG" id="mtu:Rv0542c"/>
<dbReference type="PATRIC" id="fig|83332.12.peg.601"/>
<dbReference type="TubercuList" id="Rv0542c"/>
<dbReference type="eggNOG" id="COG0318">
    <property type="taxonomic scope" value="Bacteria"/>
</dbReference>
<dbReference type="InParanoid" id="P9WQ39"/>
<dbReference type="OrthoDB" id="9803968at2"/>
<dbReference type="UniPathway" id="UPA00079"/>
<dbReference type="UniPathway" id="UPA01057">
    <property type="reaction ID" value="UER00166"/>
</dbReference>
<dbReference type="Proteomes" id="UP000001584">
    <property type="component" value="Chromosome"/>
</dbReference>
<dbReference type="GO" id="GO:0005524">
    <property type="term" value="F:ATP binding"/>
    <property type="evidence" value="ECO:0007669"/>
    <property type="project" value="UniProtKB-KW"/>
</dbReference>
<dbReference type="GO" id="GO:0008756">
    <property type="term" value="F:o-succinylbenzoate-CoA ligase activity"/>
    <property type="evidence" value="ECO:0000314"/>
    <property type="project" value="MTBBASE"/>
</dbReference>
<dbReference type="GO" id="GO:0009234">
    <property type="term" value="P:menaquinone biosynthetic process"/>
    <property type="evidence" value="ECO:0007669"/>
    <property type="project" value="UniProtKB-UniPathway"/>
</dbReference>
<dbReference type="CDD" id="cd17630">
    <property type="entry name" value="OSB_MenE-like"/>
    <property type="match status" value="1"/>
</dbReference>
<dbReference type="FunFam" id="3.30.300.30:FF:000051">
    <property type="entry name" value="O-succinylbenzoic acid--CoA ligase"/>
    <property type="match status" value="1"/>
</dbReference>
<dbReference type="FunFam" id="3.40.50.12780:FF:000088">
    <property type="entry name" value="Possible o-succinylbenzoic acid--CoA ligase menE"/>
    <property type="match status" value="1"/>
</dbReference>
<dbReference type="Gene3D" id="3.30.300.30">
    <property type="match status" value="1"/>
</dbReference>
<dbReference type="Gene3D" id="3.40.50.12780">
    <property type="entry name" value="N-terminal domain of ligase-like"/>
    <property type="match status" value="1"/>
</dbReference>
<dbReference type="InterPro" id="IPR025110">
    <property type="entry name" value="AMP-bd_C"/>
</dbReference>
<dbReference type="InterPro" id="IPR045851">
    <property type="entry name" value="AMP-bd_C_sf"/>
</dbReference>
<dbReference type="InterPro" id="IPR020845">
    <property type="entry name" value="AMP-binding_CS"/>
</dbReference>
<dbReference type="InterPro" id="IPR000873">
    <property type="entry name" value="AMP-dep_synth/lig_dom"/>
</dbReference>
<dbReference type="InterPro" id="IPR042099">
    <property type="entry name" value="ANL_N_sf"/>
</dbReference>
<dbReference type="InterPro" id="IPR050237">
    <property type="entry name" value="ATP-dep_AMP-bd_enzyme"/>
</dbReference>
<dbReference type="NCBIfam" id="NF005877">
    <property type="entry name" value="PRK07824.1"/>
    <property type="match status" value="1"/>
</dbReference>
<dbReference type="PANTHER" id="PTHR43767">
    <property type="entry name" value="LONG-CHAIN-FATTY-ACID--COA LIGASE"/>
    <property type="match status" value="1"/>
</dbReference>
<dbReference type="PANTHER" id="PTHR43767:SF1">
    <property type="entry name" value="NONRIBOSOMAL PEPTIDE SYNTHASE PES1 (EUROFUNG)-RELATED"/>
    <property type="match status" value="1"/>
</dbReference>
<dbReference type="Pfam" id="PF00501">
    <property type="entry name" value="AMP-binding"/>
    <property type="match status" value="1"/>
</dbReference>
<dbReference type="Pfam" id="PF13193">
    <property type="entry name" value="AMP-binding_C"/>
    <property type="match status" value="1"/>
</dbReference>
<dbReference type="SUPFAM" id="SSF56801">
    <property type="entry name" value="Acetyl-CoA synthetase-like"/>
    <property type="match status" value="1"/>
</dbReference>
<dbReference type="PROSITE" id="PS00455">
    <property type="entry name" value="AMP_BINDING"/>
    <property type="match status" value="1"/>
</dbReference>
<gene>
    <name type="primary">menE</name>
    <name type="ordered locus">Rv0542c</name>
</gene>
<accession>P9WQ39</accession>
<accession>L0T3Z0</accession>
<accession>O06408</accession>
<accession>Q7D9P1</accession>
<organism>
    <name type="scientific">Mycobacterium tuberculosis (strain ATCC 25618 / H37Rv)</name>
    <dbReference type="NCBI Taxonomy" id="83332"/>
    <lineage>
        <taxon>Bacteria</taxon>
        <taxon>Bacillati</taxon>
        <taxon>Actinomycetota</taxon>
        <taxon>Actinomycetes</taxon>
        <taxon>Mycobacteriales</taxon>
        <taxon>Mycobacteriaceae</taxon>
        <taxon>Mycobacterium</taxon>
        <taxon>Mycobacterium tuberculosis complex</taxon>
    </lineage>
</organism>
<proteinExistence type="evidence at protein level"/>
<protein>
    <recommendedName>
        <fullName>Probable 2-succinylbenzoate--CoA ligase</fullName>
        <ecNumber>6.2.1.26</ecNumber>
    </recommendedName>
    <alternativeName>
        <fullName>OSB-CoA synthetase</fullName>
    </alternativeName>
    <alternativeName>
        <fullName>o-succinylbenzoyl-CoA synthetase</fullName>
    </alternativeName>
</protein>
<evidence type="ECO:0000250" key="1"/>
<evidence type="ECO:0000269" key="2">
    <source>
    </source>
</evidence>
<evidence type="ECO:0000305" key="3"/>
<evidence type="ECO:0000305" key="4">
    <source>
    </source>
</evidence>
<comment type="function">
    <text evidence="1">Converts 2-succinylbenzoate (OSB) to 2-succinylbenzoyl-CoA (OSB-CoA). May be involved in the biosynthesis of menaquinone (By similarity).</text>
</comment>
<comment type="catalytic activity">
    <reaction>
        <text>2-succinylbenzoate + ATP + CoA = 2-succinylbenzoyl-CoA + AMP + diphosphate</text>
        <dbReference type="Rhea" id="RHEA:17009"/>
        <dbReference type="ChEBI" id="CHEBI:18325"/>
        <dbReference type="ChEBI" id="CHEBI:30616"/>
        <dbReference type="ChEBI" id="CHEBI:33019"/>
        <dbReference type="ChEBI" id="CHEBI:57287"/>
        <dbReference type="ChEBI" id="CHEBI:57364"/>
        <dbReference type="ChEBI" id="CHEBI:456215"/>
        <dbReference type="EC" id="6.2.1.26"/>
    </reaction>
</comment>
<comment type="pathway">
    <text>Quinol/quinone metabolism; 1,4-dihydroxy-2-naphthoate biosynthesis; 1,4-dihydroxy-2-naphthoate from chorismate: step 5/7.</text>
</comment>
<comment type="pathway">
    <text>Quinol/quinone metabolism; menaquinone biosynthesis.</text>
</comment>
<comment type="miscellaneous">
    <text>Was identified as a high-confidence drug target.</text>
</comment>
<comment type="similarity">
    <text evidence="3">Belongs to the ATP-dependent AMP-binding enzyme family. MenE subfamily.</text>
</comment>
<comment type="caution">
    <text evidence="4">The predicted start codon is CTG.</text>
</comment>
<comment type="sequence caution" evidence="2">
    <conflict type="erroneous initiation">
        <sequence resource="EMBL-CDS" id="CCP43280"/>
    </conflict>
    <text>Truncated N-terminus.</text>
</comment>
<keyword id="KW-0067">ATP-binding</keyword>
<keyword id="KW-0903">Direct protein sequencing</keyword>
<keyword id="KW-0436">Ligase</keyword>
<keyword id="KW-0474">Menaquinone biosynthesis</keyword>
<keyword id="KW-0547">Nucleotide-binding</keyword>
<keyword id="KW-1185">Reference proteome</keyword>
<name>MENE_MYCTU</name>
<reference key="1">
    <citation type="journal article" date="1998" name="Nature">
        <title>Deciphering the biology of Mycobacterium tuberculosis from the complete genome sequence.</title>
        <authorList>
            <person name="Cole S.T."/>
            <person name="Brosch R."/>
            <person name="Parkhill J."/>
            <person name="Garnier T."/>
            <person name="Churcher C.M."/>
            <person name="Harris D.E."/>
            <person name="Gordon S.V."/>
            <person name="Eiglmeier K."/>
            <person name="Gas S."/>
            <person name="Barry C.E. III"/>
            <person name="Tekaia F."/>
            <person name="Badcock K."/>
            <person name="Basham D."/>
            <person name="Brown D."/>
            <person name="Chillingworth T."/>
            <person name="Connor R."/>
            <person name="Davies R.M."/>
            <person name="Devlin K."/>
            <person name="Feltwell T."/>
            <person name="Gentles S."/>
            <person name="Hamlin N."/>
            <person name="Holroyd S."/>
            <person name="Hornsby T."/>
            <person name="Jagels K."/>
            <person name="Krogh A."/>
            <person name="McLean J."/>
            <person name="Moule S."/>
            <person name="Murphy L.D."/>
            <person name="Oliver S."/>
            <person name="Osborne J."/>
            <person name="Quail M.A."/>
            <person name="Rajandream M.A."/>
            <person name="Rogers J."/>
            <person name="Rutter S."/>
            <person name="Seeger K."/>
            <person name="Skelton S."/>
            <person name="Squares S."/>
            <person name="Squares R."/>
            <person name="Sulston J.E."/>
            <person name="Taylor K."/>
            <person name="Whitehead S."/>
            <person name="Barrell B.G."/>
        </authorList>
    </citation>
    <scope>NUCLEOTIDE SEQUENCE [LARGE SCALE GENOMIC DNA]</scope>
    <source>
        <strain>ATCC 25618 / H37Rv</strain>
    </source>
</reference>
<reference key="2">
    <citation type="journal article" date="2022" name="Genomics">
        <title>Deep N-terminomics of Mycobacterium tuberculosis H37Rv extensively correct annotated encoding genes.</title>
        <authorList>
            <person name="Shi J."/>
            <person name="Meng S."/>
            <person name="Wan L."/>
            <person name="Zhang Z."/>
            <person name="Jiang S."/>
            <person name="Zhu H."/>
            <person name="Dai E."/>
            <person name="Chang L."/>
            <person name="Gao H."/>
            <person name="Wan K."/>
            <person name="Zhang L."/>
            <person name="Zhao X."/>
            <person name="Liu H."/>
            <person name="Lyu Z."/>
            <person name="Zhang Y."/>
            <person name="Xu P."/>
        </authorList>
    </citation>
    <scope>PROTEIN SEQUENCE OF 3-21</scope>
    <scope>SEQUENCE REVISION TO N-TERMINUS</scope>
    <source>
        <strain>H37Rv</strain>
    </source>
</reference>
<reference key="3">
    <citation type="journal article" date="2008" name="BMC Syst. Biol.">
        <title>targetTB: a target identification pipeline for Mycobacterium tuberculosis through an interactome, reactome and genome-scale structural analysis.</title>
        <authorList>
            <person name="Raman K."/>
            <person name="Yeturu K."/>
            <person name="Chandra N."/>
        </authorList>
    </citation>
    <scope>IDENTIFICATION AS A DRUG TARGET [LARGE SCALE ANALYSIS]</scope>
</reference>
<reference key="4">
    <citation type="journal article" date="2011" name="Mol. Cell. Proteomics">
        <title>Proteogenomic analysis of Mycobacterium tuberculosis by high resolution mass spectrometry.</title>
        <authorList>
            <person name="Kelkar D.S."/>
            <person name="Kumar D."/>
            <person name="Kumar P."/>
            <person name="Balakrishnan L."/>
            <person name="Muthusamy B."/>
            <person name="Yadav A.K."/>
            <person name="Shrivastava P."/>
            <person name="Marimuthu A."/>
            <person name="Anand S."/>
            <person name="Sundaram H."/>
            <person name="Kingsbury R."/>
            <person name="Harsha H.C."/>
            <person name="Nair B."/>
            <person name="Prasad T.S."/>
            <person name="Chauhan D.S."/>
            <person name="Katoch K."/>
            <person name="Katoch V.M."/>
            <person name="Kumar P."/>
            <person name="Chaerkady R."/>
            <person name="Ramachandran S."/>
            <person name="Dash D."/>
            <person name="Pandey A."/>
        </authorList>
    </citation>
    <scope>IDENTIFICATION BY MASS SPECTROMETRY [LARGE SCALE ANALYSIS]</scope>
    <source>
        <strain>ATCC 25618 / H37Rv</strain>
    </source>
</reference>
<sequence>MRALHVPAGSATALLLPALQRVLGGSDPALVAVPTQHESLLGALRVGEQIDDDVALVVTTSGTTGPPKGAMLTAAALTASASAAHDRLGGPGSWLLAVPPYHIAGLAVLVRSVIAGSVPVELNVSAGFDVTELPNAIKRLGSGRRYTSLVAAQLAKALTDPAATAALAELDAVLIGGGPAPRPILDAAAAAGITVVRTYGMSETSGGCVYDGVPLDGVRLRVLAGGRIAIGGATLAKGYRNPVSPDPFAEPGWFHTDDLGALESGDSGVLTVLGRADEAISTGGFTVLPQPVEAALGTHPAVRDCAVFGLADDRLGQRVVAAIVVGDGCPPPTLEALRAHVARTLDVTAAPRELHVVNVLPRRGIGKVDRAALVRRFAGEADQ</sequence>
<feature type="chain" id="PRO_0000399477" description="Probable 2-succinylbenzoate--CoA ligase">
    <location>
        <begin position="1"/>
        <end position="383"/>
    </location>
</feature>